<name>RECO_MYCCT</name>
<evidence type="ECO:0000255" key="1">
    <source>
        <dbReference type="HAMAP-Rule" id="MF_00201"/>
    </source>
</evidence>
<accession>Q2SRY4</accession>
<organism>
    <name type="scientific">Mycoplasma capricolum subsp. capricolum (strain California kid / ATCC 27343 / NCTC 10154)</name>
    <dbReference type="NCBI Taxonomy" id="340047"/>
    <lineage>
        <taxon>Bacteria</taxon>
        <taxon>Bacillati</taxon>
        <taxon>Mycoplasmatota</taxon>
        <taxon>Mollicutes</taxon>
        <taxon>Mycoplasmataceae</taxon>
        <taxon>Mycoplasma</taxon>
    </lineage>
</organism>
<protein>
    <recommendedName>
        <fullName evidence="1">DNA repair protein RecO</fullName>
    </recommendedName>
    <alternativeName>
        <fullName evidence="1">Recombination protein O</fullName>
    </alternativeName>
</protein>
<sequence length="249" mass="28834">MEKTLKGIVLNSFDFRDYDKIITIYSNLYGKISLVCLGVNKTKSKNKYAINYLSYSNFEIFKAKNKLGLSKLKRSELINSFSHIATDFNLYVYANVLTSLVMNLEDHMKNYNLFKILKLSIFLINSKPNISFKVCILFMFYFLKIIGNQINLTVCGFCNSKINPIIAISFTNYCSSCKFCYFDDCLIIDNQLKNFINSIVKDDFIASLNQKISNQNLKILTKFVLSYYKDQVGIFTTSMYLLSTINQFK</sequence>
<gene>
    <name evidence="1" type="primary">recO</name>
    <name type="ordered locus">MCAP_0506</name>
</gene>
<feature type="chain" id="PRO_1000193400" description="DNA repair protein RecO">
    <location>
        <begin position="1"/>
        <end position="249"/>
    </location>
</feature>
<keyword id="KW-0227">DNA damage</keyword>
<keyword id="KW-0233">DNA recombination</keyword>
<keyword id="KW-0234">DNA repair</keyword>
<comment type="function">
    <text evidence="1">Involved in DNA repair and RecF pathway recombination.</text>
</comment>
<comment type="similarity">
    <text evidence="1">Belongs to the RecO family.</text>
</comment>
<reference key="1">
    <citation type="submission" date="2005-09" db="EMBL/GenBank/DDBJ databases">
        <authorList>
            <person name="Glass J.I."/>
            <person name="Lartigue C."/>
            <person name="Pfannkoch C."/>
            <person name="Baden-Tillson H."/>
            <person name="Smith H.O."/>
            <person name="Venter J.C."/>
            <person name="Roske K."/>
            <person name="Wise K.S."/>
            <person name="Calcutt M.J."/>
            <person name="Nelson W.C."/>
            <person name="Nierman W.C."/>
        </authorList>
    </citation>
    <scope>NUCLEOTIDE SEQUENCE [LARGE SCALE GENOMIC DNA]</scope>
    <source>
        <strain>California kid / ATCC 27343 / NCTC 10154</strain>
    </source>
</reference>
<proteinExistence type="inferred from homology"/>
<dbReference type="EMBL" id="CP000123">
    <property type="protein sequence ID" value="ABC01144.1"/>
    <property type="molecule type" value="Genomic_DNA"/>
</dbReference>
<dbReference type="RefSeq" id="WP_011387377.1">
    <property type="nucleotide sequence ID" value="NC_007633.1"/>
</dbReference>
<dbReference type="SMR" id="Q2SRY4"/>
<dbReference type="GeneID" id="42529613"/>
<dbReference type="KEGG" id="mcp:MCAP_0506"/>
<dbReference type="HOGENOM" id="CLU_066632_5_0_14"/>
<dbReference type="PhylomeDB" id="Q2SRY4"/>
<dbReference type="Proteomes" id="UP000001928">
    <property type="component" value="Chromosome"/>
</dbReference>
<dbReference type="GO" id="GO:0043590">
    <property type="term" value="C:bacterial nucleoid"/>
    <property type="evidence" value="ECO:0007669"/>
    <property type="project" value="TreeGrafter"/>
</dbReference>
<dbReference type="GO" id="GO:0006310">
    <property type="term" value="P:DNA recombination"/>
    <property type="evidence" value="ECO:0007669"/>
    <property type="project" value="UniProtKB-UniRule"/>
</dbReference>
<dbReference type="GO" id="GO:0006302">
    <property type="term" value="P:double-strand break repair"/>
    <property type="evidence" value="ECO:0007669"/>
    <property type="project" value="TreeGrafter"/>
</dbReference>
<dbReference type="Gene3D" id="2.40.50.140">
    <property type="entry name" value="Nucleic acid-binding proteins"/>
    <property type="match status" value="1"/>
</dbReference>
<dbReference type="HAMAP" id="MF_00201">
    <property type="entry name" value="RecO"/>
    <property type="match status" value="1"/>
</dbReference>
<dbReference type="InterPro" id="IPR037278">
    <property type="entry name" value="ARFGAP/RecO"/>
</dbReference>
<dbReference type="InterPro" id="IPR022572">
    <property type="entry name" value="DNA_rep/recomb_RecO_N"/>
</dbReference>
<dbReference type="InterPro" id="IPR012340">
    <property type="entry name" value="NA-bd_OB-fold"/>
</dbReference>
<dbReference type="InterPro" id="IPR003717">
    <property type="entry name" value="RecO"/>
</dbReference>
<dbReference type="NCBIfam" id="TIGR00613">
    <property type="entry name" value="reco"/>
    <property type="match status" value="1"/>
</dbReference>
<dbReference type="PANTHER" id="PTHR33991">
    <property type="entry name" value="DNA REPAIR PROTEIN RECO"/>
    <property type="match status" value="1"/>
</dbReference>
<dbReference type="PANTHER" id="PTHR33991:SF1">
    <property type="entry name" value="DNA REPAIR PROTEIN RECO"/>
    <property type="match status" value="1"/>
</dbReference>
<dbReference type="Pfam" id="PF02565">
    <property type="entry name" value="RecO_C"/>
    <property type="match status" value="1"/>
</dbReference>
<dbReference type="Pfam" id="PF11967">
    <property type="entry name" value="RecO_N"/>
    <property type="match status" value="1"/>
</dbReference>
<dbReference type="SUPFAM" id="SSF57863">
    <property type="entry name" value="ArfGap/RecO-like zinc finger"/>
    <property type="match status" value="1"/>
</dbReference>
<dbReference type="SUPFAM" id="SSF50249">
    <property type="entry name" value="Nucleic acid-binding proteins"/>
    <property type="match status" value="1"/>
</dbReference>